<sequence>MAASVQPACLDLHFSGKHPPLLKHNAIIVRCVSSPNVIPEADSISGPPDIINTNRDQRKVVRIAWEKLVRWSRSLRAKAKTDVLERTRKVVVLGGGSFGTAMAAHVARRKEGLEVNMLVRDSFVCQSINENHHNCKYFPEHKLPENVIATTDAKAALLDADYCLHAVPVQFSSSFLEGIADYVDPGLPFISLSKGLELNTLRMMSQIIPIALKNPRQPFVALSGPSFALELMNNLPTAMVVASKDKKLANAVQQLLASSYLRINTSSDVTGVEIAGALKNVLAIAAGIVDGMNLGNNSMAALVSQGCSEIRWLATKMGAKPTTITGLSGTGDIMLTCFVNLSRNRTVGVRLGSGETLDDILTSMNQVAEGVATAGAVIALAQKYNVKLPVLTAVAKIIDNELTPTKAVLELMNLPQIEEV</sequence>
<evidence type="ECO:0000250" key="1"/>
<evidence type="ECO:0000255" key="2"/>
<evidence type="ECO:0000269" key="3">
    <source>
    </source>
</evidence>
<evidence type="ECO:0000269" key="4">
    <source>
    </source>
</evidence>
<evidence type="ECO:0000269" key="5">
    <source>
    </source>
</evidence>
<evidence type="ECO:0000269" key="6">
    <source>
    </source>
</evidence>
<evidence type="ECO:0000269" key="7">
    <source>
    </source>
</evidence>
<evidence type="ECO:0000305" key="8"/>
<reference key="1">
    <citation type="journal article" date="1999" name="Nature">
        <title>Sequence and analysis of chromosome 2 of the plant Arabidopsis thaliana.</title>
        <authorList>
            <person name="Lin X."/>
            <person name="Kaul S."/>
            <person name="Rounsley S.D."/>
            <person name="Shea T.P."/>
            <person name="Benito M.-I."/>
            <person name="Town C.D."/>
            <person name="Fujii C.Y."/>
            <person name="Mason T.M."/>
            <person name="Bowman C.L."/>
            <person name="Barnstead M.E."/>
            <person name="Feldblyum T.V."/>
            <person name="Buell C.R."/>
            <person name="Ketchum K.A."/>
            <person name="Lee J.J."/>
            <person name="Ronning C.M."/>
            <person name="Koo H.L."/>
            <person name="Moffat K.S."/>
            <person name="Cronin L.A."/>
            <person name="Shen M."/>
            <person name="Pai G."/>
            <person name="Van Aken S."/>
            <person name="Umayam L."/>
            <person name="Tallon L.J."/>
            <person name="Gill J.E."/>
            <person name="Adams M.D."/>
            <person name="Carrera A.J."/>
            <person name="Creasy T.H."/>
            <person name="Goodman H.M."/>
            <person name="Somerville C.R."/>
            <person name="Copenhaver G.P."/>
            <person name="Preuss D."/>
            <person name="Nierman W.C."/>
            <person name="White O."/>
            <person name="Eisen J.A."/>
            <person name="Salzberg S.L."/>
            <person name="Fraser C.M."/>
            <person name="Venter J.C."/>
        </authorList>
    </citation>
    <scope>NUCLEOTIDE SEQUENCE [LARGE SCALE GENOMIC DNA]</scope>
    <source>
        <strain>cv. Columbia</strain>
    </source>
</reference>
<reference key="2">
    <citation type="journal article" date="2017" name="Plant J.">
        <title>Araport11: a complete reannotation of the Arabidopsis thaliana reference genome.</title>
        <authorList>
            <person name="Cheng C.Y."/>
            <person name="Krishnakumar V."/>
            <person name="Chan A.P."/>
            <person name="Thibaud-Nissen F."/>
            <person name="Schobel S."/>
            <person name="Town C.D."/>
        </authorList>
    </citation>
    <scope>GENOME REANNOTATION</scope>
    <source>
        <strain>cv. Columbia</strain>
    </source>
</reference>
<reference key="3">
    <citation type="journal article" date="2003" name="Science">
        <title>Empirical analysis of transcriptional activity in the Arabidopsis genome.</title>
        <authorList>
            <person name="Yamada K."/>
            <person name="Lim J."/>
            <person name="Dale J.M."/>
            <person name="Chen H."/>
            <person name="Shinn P."/>
            <person name="Palm C.J."/>
            <person name="Southwick A.M."/>
            <person name="Wu H.C."/>
            <person name="Kim C.J."/>
            <person name="Nguyen M."/>
            <person name="Pham P.K."/>
            <person name="Cheuk R.F."/>
            <person name="Karlin-Newmann G."/>
            <person name="Liu S.X."/>
            <person name="Lam B."/>
            <person name="Sakano H."/>
            <person name="Wu T."/>
            <person name="Yu G."/>
            <person name="Miranda M."/>
            <person name="Quach H.L."/>
            <person name="Tripp M."/>
            <person name="Chang C.H."/>
            <person name="Lee J.M."/>
            <person name="Toriumi M.J."/>
            <person name="Chan M.M."/>
            <person name="Tang C.C."/>
            <person name="Onodera C.S."/>
            <person name="Deng J.M."/>
            <person name="Akiyama K."/>
            <person name="Ansari Y."/>
            <person name="Arakawa T."/>
            <person name="Banh J."/>
            <person name="Banno F."/>
            <person name="Bowser L."/>
            <person name="Brooks S.Y."/>
            <person name="Carninci P."/>
            <person name="Chao Q."/>
            <person name="Choy N."/>
            <person name="Enju A."/>
            <person name="Goldsmith A.D."/>
            <person name="Gurjal M."/>
            <person name="Hansen N.F."/>
            <person name="Hayashizaki Y."/>
            <person name="Johnson-Hopson C."/>
            <person name="Hsuan V.W."/>
            <person name="Iida K."/>
            <person name="Karnes M."/>
            <person name="Khan S."/>
            <person name="Koesema E."/>
            <person name="Ishida J."/>
            <person name="Jiang P.X."/>
            <person name="Jones T."/>
            <person name="Kawai J."/>
            <person name="Kamiya A."/>
            <person name="Meyers C."/>
            <person name="Nakajima M."/>
            <person name="Narusaka M."/>
            <person name="Seki M."/>
            <person name="Sakurai T."/>
            <person name="Satou M."/>
            <person name="Tamse R."/>
            <person name="Vaysberg M."/>
            <person name="Wallender E.K."/>
            <person name="Wong C."/>
            <person name="Yamamura Y."/>
            <person name="Yuan S."/>
            <person name="Shinozaki K."/>
            <person name="Davis R.W."/>
            <person name="Theologis A."/>
            <person name="Ecker J.R."/>
        </authorList>
    </citation>
    <scope>NUCLEOTIDE SEQUENCE [LARGE SCALE MRNA]</scope>
    <source>
        <strain>cv. Columbia</strain>
    </source>
</reference>
<reference key="4">
    <citation type="journal article" date="2004" name="Plant Cell">
        <title>The Arabidopsis thaliana dihydroxyacetone phosphate reductase gene SUPPRESSSOR OF FATTY ACID DESATURASE DEFICIENCY1 is required for glycerolipid metabolism and for the activation of systemic acquired resistance.</title>
        <authorList>
            <person name="Nandi A."/>
            <person name="Welti R."/>
            <person name="Shah J."/>
        </authorList>
    </citation>
    <scope>FUNCTION</scope>
    <scope>CATALYTIC ACTIVITY</scope>
    <scope>DISRUPTION PHENOTYPE</scope>
</reference>
<reference key="5">
    <citation type="journal article" date="2004" name="Proc. Natl. Acad. Sci. U.S.A.">
        <title>Oleic acid levels regulated by glycerolipid metabolism modulate defense gene expression in Arabidopsis.</title>
        <authorList>
            <person name="Kachroo A."/>
            <person name="Venugopal S.C."/>
            <person name="Lapchyk L."/>
            <person name="Falcone D."/>
            <person name="Hildebrand D."/>
            <person name="Kachroo P."/>
        </authorList>
    </citation>
    <scope>FUNCTION</scope>
    <scope>CATALYTIC ACTIVITY</scope>
    <scope>DISRUPTION PHENOTYPE</scope>
</reference>
<reference key="6">
    <citation type="journal article" date="2007" name="Proc. Natl. Acad. Sci. U.S.A.">
        <title>Plastidial fatty acid levels regulate resistance gene-dependent defense signaling in Arabidopsis.</title>
        <authorList>
            <person name="Chandra-Shekara A.C."/>
            <person name="Venugopal S.C."/>
            <person name="Barman S.R."/>
            <person name="Kachroo A."/>
            <person name="Kachroo P."/>
        </authorList>
    </citation>
    <scope>FUNCTION</scope>
</reference>
<reference key="7">
    <citation type="journal article" date="2008" name="Plant J.">
        <title>Plastid omega3-fatty acid desaturase-dependent accumulation of a systemic acquired resistance inducing activity in petiole exudates of Arabidopsis thaliana is independent of jasmonic acid.</title>
        <authorList>
            <person name="Chaturvedi R."/>
            <person name="Krothapalli K."/>
            <person name="Makandar R."/>
            <person name="Nandi A."/>
            <person name="Sparks A.A."/>
            <person name="Roth M.R."/>
            <person name="Welti R."/>
            <person name="Shah J."/>
        </authorList>
    </citation>
    <scope>FUNCTION</scope>
</reference>
<reference key="8">
    <citation type="journal article" date="2012" name="Front. Plant Sci.">
        <title>Biochemical and molecular-genetic characterization of SFD1's involvement in lipid metabolism and defense signaling.</title>
        <authorList>
            <person name="Lorenc-Kukula K."/>
            <person name="Chaturvedi R."/>
            <person name="Roth M."/>
            <person name="Welti R."/>
            <person name="Shah J."/>
        </authorList>
    </citation>
    <scope>FUNCTION</scope>
    <scope>CATALYTIC ACTIVITY</scope>
    <scope>BIOPHYSICOCHEMICAL PROPERTIES</scope>
    <scope>MUTAGENESIS OF LYS-194; LYS-279 AND ASP-332</scope>
</reference>
<gene>
    <name type="primary">GLY1</name>
    <name type="synonym">SFD1</name>
    <name type="ordered locus">At2g40690</name>
</gene>
<proteinExistence type="evidence at protein level"/>
<name>GPDA2_ARATH</name>
<comment type="function">
    <text evidence="3 4 5 6 7">Required to supply glycerol-3-phosphate in the chloroplast for the synthesis of glycerolipids. Required for activation of systemic acquired resistance (SAR). Provision of glycerol-3-phosphate may be involved in generating lipid signals necessary for mediating defense responses and SAR.</text>
</comment>
<comment type="catalytic activity">
    <reaction evidence="3 4 7">
        <text>sn-glycerol 3-phosphate + NAD(+) = dihydroxyacetone phosphate + NADH + H(+)</text>
        <dbReference type="Rhea" id="RHEA:11092"/>
        <dbReference type="ChEBI" id="CHEBI:15378"/>
        <dbReference type="ChEBI" id="CHEBI:57540"/>
        <dbReference type="ChEBI" id="CHEBI:57597"/>
        <dbReference type="ChEBI" id="CHEBI:57642"/>
        <dbReference type="ChEBI" id="CHEBI:57945"/>
        <dbReference type="EC" id="1.1.1.8"/>
    </reaction>
</comment>
<comment type="biophysicochemical properties">
    <kinetics>
        <KM evidence="7">0.33 uM for glycerone phosphate</KM>
        <Vmax evidence="7">49.0 umol/min/mg enzyme toward glycerone phosphate</Vmax>
    </kinetics>
</comment>
<comment type="pathway">
    <text>Membrane lipid metabolism; glycerophospholipid metabolism.</text>
</comment>
<comment type="subcellular location">
    <subcellularLocation>
        <location evidence="1">Plastid</location>
        <location evidence="1">Chloroplast</location>
    </subcellularLocation>
</comment>
<comment type="disruption phenotype">
    <text evidence="3 4">No visible phenotype under normal growth conditions, but leaves have decreased levels of hexadecatrienoic fatty acid (16:3) and increased levels of oleic acid (18:1).</text>
</comment>
<comment type="similarity">
    <text evidence="8">Belongs to the NAD-dependent glycerol-3-phosphate dehydrogenase family.</text>
</comment>
<dbReference type="EC" id="1.1.1.8"/>
<dbReference type="EMBL" id="CP002685">
    <property type="protein sequence ID" value="AEC09864.1"/>
    <property type="molecule type" value="Genomic_DNA"/>
</dbReference>
<dbReference type="EMBL" id="CP002685">
    <property type="protein sequence ID" value="ANM62576.1"/>
    <property type="molecule type" value="Genomic_DNA"/>
</dbReference>
<dbReference type="EMBL" id="AY050968">
    <property type="protein sequence ID" value="AAK93645.1"/>
    <property type="molecule type" value="mRNA"/>
</dbReference>
<dbReference type="EMBL" id="AY114078">
    <property type="protein sequence ID" value="AAM45126.1"/>
    <property type="molecule type" value="mRNA"/>
</dbReference>
<dbReference type="RefSeq" id="NP_001324724.1">
    <property type="nucleotide sequence ID" value="NM_001336858.1"/>
</dbReference>
<dbReference type="RefSeq" id="NP_565939.1">
    <property type="nucleotide sequence ID" value="NM_129631.3"/>
</dbReference>
<dbReference type="SMR" id="Q949Q0"/>
<dbReference type="FunCoup" id="Q949Q0">
    <property type="interactions" value="336"/>
</dbReference>
<dbReference type="STRING" id="3702.Q949Q0"/>
<dbReference type="PaxDb" id="3702-AT2G40690.1"/>
<dbReference type="ProteomicsDB" id="248464"/>
<dbReference type="EnsemblPlants" id="AT2G40690.1">
    <property type="protein sequence ID" value="AT2G40690.1"/>
    <property type="gene ID" value="AT2G40690"/>
</dbReference>
<dbReference type="EnsemblPlants" id="AT2G40690.3">
    <property type="protein sequence ID" value="AT2G40690.3"/>
    <property type="gene ID" value="AT2G40690"/>
</dbReference>
<dbReference type="GeneID" id="818664"/>
<dbReference type="Gramene" id="AT2G40690.1">
    <property type="protein sequence ID" value="AT2G40690.1"/>
    <property type="gene ID" value="AT2G40690"/>
</dbReference>
<dbReference type="Gramene" id="AT2G40690.3">
    <property type="protein sequence ID" value="AT2G40690.3"/>
    <property type="gene ID" value="AT2G40690"/>
</dbReference>
<dbReference type="KEGG" id="ath:AT2G40690"/>
<dbReference type="Araport" id="AT2G40690"/>
<dbReference type="TAIR" id="AT2G40690">
    <property type="gene designation" value="GLY1"/>
</dbReference>
<dbReference type="eggNOG" id="KOG2711">
    <property type="taxonomic scope" value="Eukaryota"/>
</dbReference>
<dbReference type="HOGENOM" id="CLU_033449_6_2_1"/>
<dbReference type="InParanoid" id="Q949Q0"/>
<dbReference type="OrthoDB" id="10263760at2759"/>
<dbReference type="PhylomeDB" id="Q949Q0"/>
<dbReference type="BRENDA" id="1.1.1.8">
    <property type="organism ID" value="399"/>
</dbReference>
<dbReference type="SABIO-RK" id="Q949Q0"/>
<dbReference type="UniPathway" id="UPA00940"/>
<dbReference type="PRO" id="PR:Q949Q0"/>
<dbReference type="Proteomes" id="UP000006548">
    <property type="component" value="Chromosome 2"/>
</dbReference>
<dbReference type="ExpressionAtlas" id="Q949Q0">
    <property type="expression patterns" value="baseline and differential"/>
</dbReference>
<dbReference type="GO" id="GO:0009941">
    <property type="term" value="C:chloroplast envelope"/>
    <property type="evidence" value="ECO:0007005"/>
    <property type="project" value="TAIR"/>
</dbReference>
<dbReference type="GO" id="GO:0141152">
    <property type="term" value="F:glycerol-3-phosphate dehydrogenase (NAD+) activity"/>
    <property type="evidence" value="ECO:0007669"/>
    <property type="project" value="UniProtKB-EC"/>
</dbReference>
<dbReference type="GO" id="GO:0051287">
    <property type="term" value="F:NAD binding"/>
    <property type="evidence" value="ECO:0007669"/>
    <property type="project" value="InterPro"/>
</dbReference>
<dbReference type="GO" id="GO:0005975">
    <property type="term" value="P:carbohydrate metabolic process"/>
    <property type="evidence" value="ECO:0007669"/>
    <property type="project" value="InterPro"/>
</dbReference>
<dbReference type="GO" id="GO:0046168">
    <property type="term" value="P:glycerol-3-phosphate catabolic process"/>
    <property type="evidence" value="ECO:0007669"/>
    <property type="project" value="InterPro"/>
</dbReference>
<dbReference type="GO" id="GO:0045017">
    <property type="term" value="P:glycerolipid biosynthetic process"/>
    <property type="evidence" value="ECO:0000315"/>
    <property type="project" value="TAIR"/>
</dbReference>
<dbReference type="GO" id="GO:0046486">
    <property type="term" value="P:glycerolipid metabolic process"/>
    <property type="evidence" value="ECO:0000315"/>
    <property type="project" value="TAIR"/>
</dbReference>
<dbReference type="GO" id="GO:0006650">
    <property type="term" value="P:glycerophospholipid metabolic process"/>
    <property type="evidence" value="ECO:0007669"/>
    <property type="project" value="UniProtKB-UniPathway"/>
</dbReference>
<dbReference type="GO" id="GO:0008654">
    <property type="term" value="P:phospholipid biosynthetic process"/>
    <property type="evidence" value="ECO:0007669"/>
    <property type="project" value="UniProtKB-KW"/>
</dbReference>
<dbReference type="GO" id="GO:0009627">
    <property type="term" value="P:systemic acquired resistance"/>
    <property type="evidence" value="ECO:0000315"/>
    <property type="project" value="TAIR"/>
</dbReference>
<dbReference type="FunFam" id="1.10.1040.10:FF:000031">
    <property type="entry name" value="Glycerol-3-phosphate dehydrogenase (NAD(P)(+))"/>
    <property type="match status" value="1"/>
</dbReference>
<dbReference type="FunFam" id="3.40.50.720:FF:000019">
    <property type="entry name" value="Glycerol-3-phosphate dehydrogenase [NAD(P)+]"/>
    <property type="match status" value="1"/>
</dbReference>
<dbReference type="Gene3D" id="1.10.1040.10">
    <property type="entry name" value="N-(1-d-carboxylethyl)-l-norvaline Dehydrogenase, domain 2"/>
    <property type="match status" value="1"/>
</dbReference>
<dbReference type="Gene3D" id="3.40.50.720">
    <property type="entry name" value="NAD(P)-binding Rossmann-like Domain"/>
    <property type="match status" value="1"/>
</dbReference>
<dbReference type="HAMAP" id="MF_00394">
    <property type="entry name" value="NAD_Glyc3P_dehydrog"/>
    <property type="match status" value="1"/>
</dbReference>
<dbReference type="InterPro" id="IPR008927">
    <property type="entry name" value="6-PGluconate_DH-like_C_sf"/>
</dbReference>
<dbReference type="InterPro" id="IPR013328">
    <property type="entry name" value="6PGD_dom2"/>
</dbReference>
<dbReference type="InterPro" id="IPR006168">
    <property type="entry name" value="G3P_DH_NAD-dep"/>
</dbReference>
<dbReference type="InterPro" id="IPR006109">
    <property type="entry name" value="G3P_DH_NAD-dep_C"/>
</dbReference>
<dbReference type="InterPro" id="IPR011128">
    <property type="entry name" value="G3P_DH_NAD-dep_N"/>
</dbReference>
<dbReference type="InterPro" id="IPR036291">
    <property type="entry name" value="NAD(P)-bd_dom_sf"/>
</dbReference>
<dbReference type="NCBIfam" id="NF000940">
    <property type="entry name" value="PRK00094.1-2"/>
    <property type="match status" value="1"/>
</dbReference>
<dbReference type="NCBIfam" id="NF000942">
    <property type="entry name" value="PRK00094.1-4"/>
    <property type="match status" value="1"/>
</dbReference>
<dbReference type="PANTHER" id="PTHR11728">
    <property type="entry name" value="GLYCEROL-3-PHOSPHATE DEHYDROGENASE"/>
    <property type="match status" value="1"/>
</dbReference>
<dbReference type="PANTHER" id="PTHR11728:SF1">
    <property type="entry name" value="GLYCEROL-3-PHOSPHATE DEHYDROGENASE [NAD(+)] 2, CHLOROPLASTIC"/>
    <property type="match status" value="1"/>
</dbReference>
<dbReference type="Pfam" id="PF07479">
    <property type="entry name" value="NAD_Gly3P_dh_C"/>
    <property type="match status" value="1"/>
</dbReference>
<dbReference type="Pfam" id="PF01210">
    <property type="entry name" value="NAD_Gly3P_dh_N"/>
    <property type="match status" value="1"/>
</dbReference>
<dbReference type="PRINTS" id="PR00077">
    <property type="entry name" value="GPDHDRGNASE"/>
</dbReference>
<dbReference type="SUPFAM" id="SSF48179">
    <property type="entry name" value="6-phosphogluconate dehydrogenase C-terminal domain-like"/>
    <property type="match status" value="1"/>
</dbReference>
<dbReference type="SUPFAM" id="SSF51735">
    <property type="entry name" value="NAD(P)-binding Rossmann-fold domains"/>
    <property type="match status" value="1"/>
</dbReference>
<dbReference type="PROSITE" id="PS00957">
    <property type="entry name" value="NAD_G3PDH"/>
    <property type="match status" value="1"/>
</dbReference>
<accession>Q949Q0</accession>
<feature type="transit peptide" description="Chloroplast" evidence="2">
    <location>
        <begin position="1"/>
        <end position="45"/>
    </location>
</feature>
<feature type="chain" id="PRO_0000420174" description="Glycerol-3-phosphate dehydrogenase [NAD(+)] 2, chloroplastic">
    <location>
        <begin position="46"/>
        <end position="420"/>
    </location>
</feature>
<feature type="active site" description="Proton acceptor" evidence="1">
    <location>
        <position position="279"/>
    </location>
</feature>
<feature type="binding site" evidence="1">
    <location>
        <begin position="94"/>
        <end position="99"/>
    </location>
    <ligand>
        <name>NAD(+)</name>
        <dbReference type="ChEBI" id="CHEBI:57540"/>
    </ligand>
</feature>
<feature type="binding site" evidence="1">
    <location>
        <position position="171"/>
    </location>
    <ligand>
        <name>NAD(+)</name>
        <dbReference type="ChEBI" id="CHEBI:57540"/>
    </ligand>
</feature>
<feature type="binding site" evidence="1">
    <location>
        <position position="194"/>
    </location>
    <ligand>
        <name>NAD(+)</name>
        <dbReference type="ChEBI" id="CHEBI:57540"/>
    </ligand>
</feature>
<feature type="binding site" evidence="1">
    <location>
        <position position="194"/>
    </location>
    <ligand>
        <name>substrate</name>
    </ligand>
</feature>
<feature type="binding site" evidence="1">
    <location>
        <position position="228"/>
    </location>
    <ligand>
        <name>NAD(+)</name>
        <dbReference type="ChEBI" id="CHEBI:57540"/>
    </ligand>
</feature>
<feature type="binding site" evidence="1">
    <location>
        <begin position="343"/>
        <end position="344"/>
    </location>
    <ligand>
        <name>substrate</name>
    </ligand>
</feature>
<feature type="binding site" evidence="1">
    <location>
        <position position="343"/>
    </location>
    <ligand>
        <name>NAD(+)</name>
        <dbReference type="ChEBI" id="CHEBI:57540"/>
    </ligand>
</feature>
<feature type="binding site" evidence="1">
    <location>
        <position position="369"/>
    </location>
    <ligand>
        <name>NAD(+)</name>
        <dbReference type="ChEBI" id="CHEBI:57540"/>
    </ligand>
</feature>
<feature type="mutagenesis site" description="Loss of activity." evidence="7">
    <original>K</original>
    <variation>A</variation>
    <location>
        <position position="194"/>
    </location>
</feature>
<feature type="mutagenesis site" description="Loss of activity." evidence="7">
    <original>K</original>
    <variation>A</variation>
    <location>
        <position position="279"/>
    </location>
</feature>
<feature type="mutagenesis site" description="Loss of activity." evidence="7">
    <original>D</original>
    <variation>A</variation>
    <location>
        <position position="332"/>
    </location>
</feature>
<protein>
    <recommendedName>
        <fullName>Glycerol-3-phosphate dehydrogenase [NAD(+)] 2, chloroplastic</fullName>
        <ecNumber>1.1.1.8</ecNumber>
    </recommendedName>
    <alternativeName>
        <fullName>Protein SUPPRESSOR OF FATTY ACID DESATURASE DEFICIENCY 1</fullName>
    </alternativeName>
</protein>
<organism>
    <name type="scientific">Arabidopsis thaliana</name>
    <name type="common">Mouse-ear cress</name>
    <dbReference type="NCBI Taxonomy" id="3702"/>
    <lineage>
        <taxon>Eukaryota</taxon>
        <taxon>Viridiplantae</taxon>
        <taxon>Streptophyta</taxon>
        <taxon>Embryophyta</taxon>
        <taxon>Tracheophyta</taxon>
        <taxon>Spermatophyta</taxon>
        <taxon>Magnoliopsida</taxon>
        <taxon>eudicotyledons</taxon>
        <taxon>Gunneridae</taxon>
        <taxon>Pentapetalae</taxon>
        <taxon>rosids</taxon>
        <taxon>malvids</taxon>
        <taxon>Brassicales</taxon>
        <taxon>Brassicaceae</taxon>
        <taxon>Camelineae</taxon>
        <taxon>Arabidopsis</taxon>
    </lineage>
</organism>
<keyword id="KW-0150">Chloroplast</keyword>
<keyword id="KW-0444">Lipid biosynthesis</keyword>
<keyword id="KW-0443">Lipid metabolism</keyword>
<keyword id="KW-0520">NAD</keyword>
<keyword id="KW-0560">Oxidoreductase</keyword>
<keyword id="KW-0594">Phospholipid biosynthesis</keyword>
<keyword id="KW-1208">Phospholipid metabolism</keyword>
<keyword id="KW-0611">Plant defense</keyword>
<keyword id="KW-0934">Plastid</keyword>
<keyword id="KW-1185">Reference proteome</keyword>
<keyword id="KW-0809">Transit peptide</keyword>